<evidence type="ECO:0000250" key="1">
    <source>
        <dbReference type="UniProtKB" id="Q9UBW7"/>
    </source>
</evidence>
<evidence type="ECO:0000255" key="2"/>
<evidence type="ECO:0000256" key="3">
    <source>
        <dbReference type="SAM" id="MobiDB-lite"/>
    </source>
</evidence>
<evidence type="ECO:0000269" key="4">
    <source>
    </source>
</evidence>
<evidence type="ECO:0007744" key="5">
    <source>
    </source>
</evidence>
<evidence type="ECO:0007744" key="6">
    <source>
    </source>
</evidence>
<protein>
    <recommendedName>
        <fullName>Zinc finger MYM-type protein 2</fullName>
    </recommendedName>
    <alternativeName>
        <fullName>Zinc finger protein 198</fullName>
    </alternativeName>
</protein>
<comment type="function">
    <text evidence="1">Involved in the negative regulation of transcription.</text>
</comment>
<comment type="subunit">
    <text evidence="1">Can form homodimers (By similarity). May be a component of a BHC histone deacetylase complex that contains HDAC1, HDAC2, HMG20B/BRAF35, KDM1A, RCOR1/CoREST, PHF21A/BHC80, ZMYM2, ZNF217, ZMYM3, GSE1 and GTF2I. Interacts with FOXP1 and FOXP2 (By similarity).</text>
</comment>
<comment type="subcellular location">
    <subcellularLocation>
        <location evidence="1">Nucleus</location>
    </subcellularLocation>
</comment>
<comment type="tissue specificity">
    <text evidence="4">Low but widespread expression is detected in the developing kidney.</text>
</comment>
<proteinExistence type="evidence at protein level"/>
<dbReference type="EMBL" id="AK017929">
    <property type="protein sequence ID" value="BAB31008.1"/>
    <property type="molecule type" value="mRNA"/>
</dbReference>
<dbReference type="EMBL" id="AK135499">
    <property type="protein sequence ID" value="BAE22556.1"/>
    <property type="molecule type" value="mRNA"/>
</dbReference>
<dbReference type="EMBL" id="AK137708">
    <property type="protein sequence ID" value="BAE23471.1"/>
    <property type="molecule type" value="mRNA"/>
</dbReference>
<dbReference type="EMBL" id="AK137720">
    <property type="protein sequence ID" value="BAE23475.1"/>
    <property type="molecule type" value="mRNA"/>
</dbReference>
<dbReference type="EMBL" id="BC043450">
    <property type="protein sequence ID" value="AAH43450.1"/>
    <property type="molecule type" value="mRNA"/>
</dbReference>
<dbReference type="EMBL" id="BC141403">
    <property type="protein sequence ID" value="AAI41404.1"/>
    <property type="molecule type" value="mRNA"/>
</dbReference>
<dbReference type="CCDS" id="CCDS49506.1"/>
<dbReference type="RefSeq" id="NP_001347572.1">
    <property type="nucleotide sequence ID" value="NM_001360643.1"/>
</dbReference>
<dbReference type="RefSeq" id="NP_083774.2">
    <property type="nucleotide sequence ID" value="NM_029498.3"/>
</dbReference>
<dbReference type="RefSeq" id="XP_006519728.1">
    <property type="nucleotide sequence ID" value="XM_006519665.3"/>
</dbReference>
<dbReference type="RefSeq" id="XP_017171710.1">
    <property type="nucleotide sequence ID" value="XM_017316221.1"/>
</dbReference>
<dbReference type="RefSeq" id="XP_030103951.1">
    <property type="nucleotide sequence ID" value="XM_030248091.1"/>
</dbReference>
<dbReference type="SMR" id="Q9CU65"/>
<dbReference type="BioGRID" id="217903">
    <property type="interactions" value="18"/>
</dbReference>
<dbReference type="DIP" id="DIP-29928N"/>
<dbReference type="FunCoup" id="Q9CU65">
    <property type="interactions" value="5256"/>
</dbReference>
<dbReference type="IntAct" id="Q9CU65">
    <property type="interactions" value="4"/>
</dbReference>
<dbReference type="MINT" id="Q9CU65"/>
<dbReference type="STRING" id="10090.ENSMUSP00000022511"/>
<dbReference type="GlyGen" id="Q9CU65">
    <property type="glycosylation" value="1 site"/>
</dbReference>
<dbReference type="iPTMnet" id="Q9CU65"/>
<dbReference type="PhosphoSitePlus" id="Q9CU65"/>
<dbReference type="SwissPalm" id="Q9CU65"/>
<dbReference type="jPOST" id="Q9CU65"/>
<dbReference type="PaxDb" id="10090-ENSMUSP00000022511"/>
<dbReference type="PeptideAtlas" id="Q9CU65"/>
<dbReference type="ProteomicsDB" id="299567"/>
<dbReference type="Pumba" id="Q9CU65"/>
<dbReference type="Antibodypedia" id="22277">
    <property type="antibodies" value="143 antibodies from 24 providers"/>
</dbReference>
<dbReference type="DNASU" id="76007"/>
<dbReference type="Ensembl" id="ENSMUST00000022511.10">
    <property type="protein sequence ID" value="ENSMUSP00000022511.9"/>
    <property type="gene ID" value="ENSMUSG00000021945.10"/>
</dbReference>
<dbReference type="GeneID" id="76007"/>
<dbReference type="KEGG" id="mmu:76007"/>
<dbReference type="UCSC" id="uc007ucs.1">
    <property type="organism name" value="mouse"/>
</dbReference>
<dbReference type="AGR" id="MGI:1923257"/>
<dbReference type="CTD" id="7750"/>
<dbReference type="MGI" id="MGI:1923257">
    <property type="gene designation" value="Zmym2"/>
</dbReference>
<dbReference type="VEuPathDB" id="HostDB:ENSMUSG00000021945"/>
<dbReference type="eggNOG" id="ENOG502QQQ9">
    <property type="taxonomic scope" value="Eukaryota"/>
</dbReference>
<dbReference type="GeneTree" id="ENSGT00940000157028"/>
<dbReference type="HOGENOM" id="CLU_004099_0_0_1"/>
<dbReference type="InParanoid" id="Q9CU65"/>
<dbReference type="OMA" id="KEPTCHF"/>
<dbReference type="OrthoDB" id="10025028at2759"/>
<dbReference type="PhylomeDB" id="Q9CU65"/>
<dbReference type="TreeFam" id="TF336988"/>
<dbReference type="BioGRID-ORCS" id="76007">
    <property type="hits" value="10 hits in 86 CRISPR screens"/>
</dbReference>
<dbReference type="ChiTaRS" id="Zmym2">
    <property type="organism name" value="mouse"/>
</dbReference>
<dbReference type="PRO" id="PR:Q9CU65"/>
<dbReference type="Proteomes" id="UP000000589">
    <property type="component" value="Chromosome 14"/>
</dbReference>
<dbReference type="RNAct" id="Q9CU65">
    <property type="molecule type" value="protein"/>
</dbReference>
<dbReference type="Bgee" id="ENSMUSG00000021945">
    <property type="expression patterns" value="Expressed in manus and 231 other cell types or tissues"/>
</dbReference>
<dbReference type="ExpressionAtlas" id="Q9CU65">
    <property type="expression patterns" value="baseline and differential"/>
</dbReference>
<dbReference type="GO" id="GO:0005634">
    <property type="term" value="C:nucleus"/>
    <property type="evidence" value="ECO:0000250"/>
    <property type="project" value="UniProtKB"/>
</dbReference>
<dbReference type="GO" id="GO:0016605">
    <property type="term" value="C:PML body"/>
    <property type="evidence" value="ECO:0007669"/>
    <property type="project" value="Ensembl"/>
</dbReference>
<dbReference type="GO" id="GO:0031624">
    <property type="term" value="F:ubiquitin conjugating enzyme binding"/>
    <property type="evidence" value="ECO:0007669"/>
    <property type="project" value="Ensembl"/>
</dbReference>
<dbReference type="GO" id="GO:0008270">
    <property type="term" value="F:zinc ion binding"/>
    <property type="evidence" value="ECO:0007669"/>
    <property type="project" value="UniProtKB-KW"/>
</dbReference>
<dbReference type="GO" id="GO:0045892">
    <property type="term" value="P:negative regulation of DNA-templated transcription"/>
    <property type="evidence" value="ECO:0000250"/>
    <property type="project" value="UniProtKB"/>
</dbReference>
<dbReference type="InterPro" id="IPR021893">
    <property type="entry name" value="DUF3504"/>
</dbReference>
<dbReference type="InterPro" id="IPR011017">
    <property type="entry name" value="TRASH_dom"/>
</dbReference>
<dbReference type="InterPro" id="IPR010507">
    <property type="entry name" value="Znf_MYM"/>
</dbReference>
<dbReference type="InterPro" id="IPR051284">
    <property type="entry name" value="ZnF_MYMT-QRICH1"/>
</dbReference>
<dbReference type="PANTHER" id="PTHR45736">
    <property type="entry name" value="ZINC FINGER MYM-TYPE PROTEIN"/>
    <property type="match status" value="1"/>
</dbReference>
<dbReference type="PANTHER" id="PTHR45736:SF6">
    <property type="entry name" value="ZINC FINGER MYM-TYPE PROTEIN 2"/>
    <property type="match status" value="1"/>
</dbReference>
<dbReference type="Pfam" id="PF12012">
    <property type="entry name" value="DUF3504"/>
    <property type="match status" value="1"/>
</dbReference>
<dbReference type="Pfam" id="PF06467">
    <property type="entry name" value="zf-FCS"/>
    <property type="match status" value="9"/>
</dbReference>
<dbReference type="SMART" id="SM00746">
    <property type="entry name" value="TRASH"/>
    <property type="match status" value="9"/>
</dbReference>
<dbReference type="SUPFAM" id="SSF57716">
    <property type="entry name" value="Glucocorticoid receptor-like (DNA-binding domain)"/>
    <property type="match status" value="1"/>
</dbReference>
<organism>
    <name type="scientific">Mus musculus</name>
    <name type="common">Mouse</name>
    <dbReference type="NCBI Taxonomy" id="10090"/>
    <lineage>
        <taxon>Eukaryota</taxon>
        <taxon>Metazoa</taxon>
        <taxon>Chordata</taxon>
        <taxon>Craniata</taxon>
        <taxon>Vertebrata</taxon>
        <taxon>Euteleostomi</taxon>
        <taxon>Mammalia</taxon>
        <taxon>Eutheria</taxon>
        <taxon>Euarchontoglires</taxon>
        <taxon>Glires</taxon>
        <taxon>Rodentia</taxon>
        <taxon>Myomorpha</taxon>
        <taxon>Muroidea</taxon>
        <taxon>Muridae</taxon>
        <taxon>Murinae</taxon>
        <taxon>Mus</taxon>
        <taxon>Mus</taxon>
    </lineage>
</organism>
<reference key="1">
    <citation type="journal article" date="2005" name="Science">
        <title>The transcriptional landscape of the mammalian genome.</title>
        <authorList>
            <person name="Carninci P."/>
            <person name="Kasukawa T."/>
            <person name="Katayama S."/>
            <person name="Gough J."/>
            <person name="Frith M.C."/>
            <person name="Maeda N."/>
            <person name="Oyama R."/>
            <person name="Ravasi T."/>
            <person name="Lenhard B."/>
            <person name="Wells C."/>
            <person name="Kodzius R."/>
            <person name="Shimokawa K."/>
            <person name="Bajic V.B."/>
            <person name="Brenner S.E."/>
            <person name="Batalov S."/>
            <person name="Forrest A.R."/>
            <person name="Zavolan M."/>
            <person name="Davis M.J."/>
            <person name="Wilming L.G."/>
            <person name="Aidinis V."/>
            <person name="Allen J.E."/>
            <person name="Ambesi-Impiombato A."/>
            <person name="Apweiler R."/>
            <person name="Aturaliya R.N."/>
            <person name="Bailey T.L."/>
            <person name="Bansal M."/>
            <person name="Baxter L."/>
            <person name="Beisel K.W."/>
            <person name="Bersano T."/>
            <person name="Bono H."/>
            <person name="Chalk A.M."/>
            <person name="Chiu K.P."/>
            <person name="Choudhary V."/>
            <person name="Christoffels A."/>
            <person name="Clutterbuck D.R."/>
            <person name="Crowe M.L."/>
            <person name="Dalla E."/>
            <person name="Dalrymple B.P."/>
            <person name="de Bono B."/>
            <person name="Della Gatta G."/>
            <person name="di Bernardo D."/>
            <person name="Down T."/>
            <person name="Engstrom P."/>
            <person name="Fagiolini M."/>
            <person name="Faulkner G."/>
            <person name="Fletcher C.F."/>
            <person name="Fukushima T."/>
            <person name="Furuno M."/>
            <person name="Futaki S."/>
            <person name="Gariboldi M."/>
            <person name="Georgii-Hemming P."/>
            <person name="Gingeras T.R."/>
            <person name="Gojobori T."/>
            <person name="Green R.E."/>
            <person name="Gustincich S."/>
            <person name="Harbers M."/>
            <person name="Hayashi Y."/>
            <person name="Hensch T.K."/>
            <person name="Hirokawa N."/>
            <person name="Hill D."/>
            <person name="Huminiecki L."/>
            <person name="Iacono M."/>
            <person name="Ikeo K."/>
            <person name="Iwama A."/>
            <person name="Ishikawa T."/>
            <person name="Jakt M."/>
            <person name="Kanapin A."/>
            <person name="Katoh M."/>
            <person name="Kawasawa Y."/>
            <person name="Kelso J."/>
            <person name="Kitamura H."/>
            <person name="Kitano H."/>
            <person name="Kollias G."/>
            <person name="Krishnan S.P."/>
            <person name="Kruger A."/>
            <person name="Kummerfeld S.K."/>
            <person name="Kurochkin I.V."/>
            <person name="Lareau L.F."/>
            <person name="Lazarevic D."/>
            <person name="Lipovich L."/>
            <person name="Liu J."/>
            <person name="Liuni S."/>
            <person name="McWilliam S."/>
            <person name="Madan Babu M."/>
            <person name="Madera M."/>
            <person name="Marchionni L."/>
            <person name="Matsuda H."/>
            <person name="Matsuzawa S."/>
            <person name="Miki H."/>
            <person name="Mignone F."/>
            <person name="Miyake S."/>
            <person name="Morris K."/>
            <person name="Mottagui-Tabar S."/>
            <person name="Mulder N."/>
            <person name="Nakano N."/>
            <person name="Nakauchi H."/>
            <person name="Ng P."/>
            <person name="Nilsson R."/>
            <person name="Nishiguchi S."/>
            <person name="Nishikawa S."/>
            <person name="Nori F."/>
            <person name="Ohara O."/>
            <person name="Okazaki Y."/>
            <person name="Orlando V."/>
            <person name="Pang K.C."/>
            <person name="Pavan W.J."/>
            <person name="Pavesi G."/>
            <person name="Pesole G."/>
            <person name="Petrovsky N."/>
            <person name="Piazza S."/>
            <person name="Reed J."/>
            <person name="Reid J.F."/>
            <person name="Ring B.Z."/>
            <person name="Ringwald M."/>
            <person name="Rost B."/>
            <person name="Ruan Y."/>
            <person name="Salzberg S.L."/>
            <person name="Sandelin A."/>
            <person name="Schneider C."/>
            <person name="Schoenbach C."/>
            <person name="Sekiguchi K."/>
            <person name="Semple C.A."/>
            <person name="Seno S."/>
            <person name="Sessa L."/>
            <person name="Sheng Y."/>
            <person name="Shibata Y."/>
            <person name="Shimada H."/>
            <person name="Shimada K."/>
            <person name="Silva D."/>
            <person name="Sinclair B."/>
            <person name="Sperling S."/>
            <person name="Stupka E."/>
            <person name="Sugiura K."/>
            <person name="Sultana R."/>
            <person name="Takenaka Y."/>
            <person name="Taki K."/>
            <person name="Tammoja K."/>
            <person name="Tan S.L."/>
            <person name="Tang S."/>
            <person name="Taylor M.S."/>
            <person name="Tegner J."/>
            <person name="Teichmann S.A."/>
            <person name="Ueda H.R."/>
            <person name="van Nimwegen E."/>
            <person name="Verardo R."/>
            <person name="Wei C.L."/>
            <person name="Yagi K."/>
            <person name="Yamanishi H."/>
            <person name="Zabarovsky E."/>
            <person name="Zhu S."/>
            <person name="Zimmer A."/>
            <person name="Hide W."/>
            <person name="Bult C."/>
            <person name="Grimmond S.M."/>
            <person name="Teasdale R.D."/>
            <person name="Liu E.T."/>
            <person name="Brusic V."/>
            <person name="Quackenbush J."/>
            <person name="Wahlestedt C."/>
            <person name="Mattick J.S."/>
            <person name="Hume D.A."/>
            <person name="Kai C."/>
            <person name="Sasaki D."/>
            <person name="Tomaru Y."/>
            <person name="Fukuda S."/>
            <person name="Kanamori-Katayama M."/>
            <person name="Suzuki M."/>
            <person name="Aoki J."/>
            <person name="Arakawa T."/>
            <person name="Iida J."/>
            <person name="Imamura K."/>
            <person name="Itoh M."/>
            <person name="Kato T."/>
            <person name="Kawaji H."/>
            <person name="Kawagashira N."/>
            <person name="Kawashima T."/>
            <person name="Kojima M."/>
            <person name="Kondo S."/>
            <person name="Konno H."/>
            <person name="Nakano K."/>
            <person name="Ninomiya N."/>
            <person name="Nishio T."/>
            <person name="Okada M."/>
            <person name="Plessy C."/>
            <person name="Shibata K."/>
            <person name="Shiraki T."/>
            <person name="Suzuki S."/>
            <person name="Tagami M."/>
            <person name="Waki K."/>
            <person name="Watahiki A."/>
            <person name="Okamura-Oho Y."/>
            <person name="Suzuki H."/>
            <person name="Kawai J."/>
            <person name="Hayashizaki Y."/>
        </authorList>
    </citation>
    <scope>NUCLEOTIDE SEQUENCE [LARGE SCALE MRNA]</scope>
    <source>
        <strain>C57BL/6J</strain>
        <tissue>Muellerian duct</tissue>
        <tissue>Thymus</tissue>
    </source>
</reference>
<reference key="2">
    <citation type="journal article" date="2004" name="Genome Res.">
        <title>The status, quality, and expansion of the NIH full-length cDNA project: the Mammalian Gene Collection (MGC).</title>
        <authorList>
            <consortium name="The MGC Project Team"/>
        </authorList>
    </citation>
    <scope>NUCLEOTIDE SEQUENCE [LARGE SCALE MRNA]</scope>
    <source>
        <tissue>Brain</tissue>
        <tissue>Eye</tissue>
    </source>
</reference>
<reference key="3">
    <citation type="journal article" date="2007" name="Proc. Natl. Acad. Sci. U.S.A.">
        <title>Large-scale phosphorylation analysis of mouse liver.</title>
        <authorList>
            <person name="Villen J."/>
            <person name="Beausoleil S.A."/>
            <person name="Gerber S.A."/>
            <person name="Gygi S.P."/>
        </authorList>
    </citation>
    <scope>PHOSPHORYLATION [LARGE SCALE ANALYSIS] AT THR-1375</scope>
    <scope>IDENTIFICATION BY MASS SPECTROMETRY [LARGE SCALE ANALYSIS]</scope>
    <source>
        <tissue>Liver</tissue>
    </source>
</reference>
<reference key="4">
    <citation type="journal article" date="2010" name="Cell">
        <title>A tissue-specific atlas of mouse protein phosphorylation and expression.</title>
        <authorList>
            <person name="Huttlin E.L."/>
            <person name="Jedrychowski M.P."/>
            <person name="Elias J.E."/>
            <person name="Goswami T."/>
            <person name="Rad R."/>
            <person name="Beausoleil S.A."/>
            <person name="Villen J."/>
            <person name="Haas W."/>
            <person name="Sowa M.E."/>
            <person name="Gygi S.P."/>
        </authorList>
    </citation>
    <scope>PHOSPHORYLATION [LARGE SCALE ANALYSIS] AT SER-1063 AND THR-1375</scope>
    <scope>IDENTIFICATION BY MASS SPECTROMETRY [LARGE SCALE ANALYSIS]</scope>
    <source>
        <tissue>Brain</tissue>
        <tissue>Heart</tissue>
        <tissue>Kidney</tissue>
        <tissue>Liver</tissue>
        <tissue>Spleen</tissue>
        <tissue>Testis</tissue>
    </source>
</reference>
<reference key="5">
    <citation type="journal article" date="2020" name="Am. J. Hum. Genet.">
        <title>Mutations of the transcriptional corepressor ZMYM2 cause syndromic urinary tract malformations.</title>
        <authorList>
            <person name="Connaughton D.M."/>
            <person name="Dai R."/>
            <person name="Owen D.J."/>
            <person name="Marquez J."/>
            <person name="Mann N."/>
            <person name="Graham-Paquin A.L."/>
            <person name="Nakayama M."/>
            <person name="Coyaud E."/>
            <person name="Laurent E.M.N."/>
            <person name="St-Germain J.R."/>
            <person name="Blok L.S."/>
            <person name="Vino A."/>
            <person name="Klaembt V."/>
            <person name="Deutsch K."/>
            <person name="Wu C.W."/>
            <person name="Kolvenbach C.M."/>
            <person name="Kause F."/>
            <person name="Ottlewski I."/>
            <person name="Schneider R."/>
            <person name="Kitzler T.M."/>
            <person name="Majmundar A.J."/>
            <person name="Buerger F."/>
            <person name="Onuchic-Whitford A.C."/>
            <person name="Youying M."/>
            <person name="Kolb A."/>
            <person name="Salmanullah D."/>
            <person name="Chen E."/>
            <person name="van der Ven A.T."/>
            <person name="Rao J."/>
            <person name="Ityel H."/>
            <person name="Seltzsam S."/>
            <person name="Rieke J.M."/>
            <person name="Chen J."/>
            <person name="Vivante A."/>
            <person name="Hwang D.Y."/>
            <person name="Kohl S."/>
            <person name="Dworschak G.C."/>
            <person name="Hermle T."/>
            <person name="Alders M."/>
            <person name="Bartolomaeus T."/>
            <person name="Bauer S.B."/>
            <person name="Baum M.A."/>
            <person name="Brilstra E.H."/>
            <person name="Challman T.D."/>
            <person name="Zyskind J."/>
            <person name="Costin C.E."/>
            <person name="Dipple K.M."/>
            <person name="Duijkers F.A."/>
            <person name="Ferguson M."/>
            <person name="Fitzpatrick D.R."/>
            <person name="Fick R."/>
            <person name="Glass I.A."/>
            <person name="Hulick P.J."/>
            <person name="Kline A.D."/>
            <person name="Krey I."/>
            <person name="Kumar S."/>
            <person name="Lu W."/>
            <person name="Marco E.J."/>
            <person name="Wentzensen I.M."/>
            <person name="Mefford H.C."/>
            <person name="Platzer K."/>
            <person name="Povolotskaya I.S."/>
            <person name="Savatt J.M."/>
            <person name="Shcherbakova N.V."/>
            <person name="Senguttuvan P."/>
            <person name="Squire A.E."/>
            <person name="Stein D.R."/>
            <person name="Thiffault I."/>
            <person name="Voinova V.Y."/>
            <person name="Somers M.J.G."/>
            <person name="Ferguson M.A."/>
            <person name="Traum A.Z."/>
            <person name="Daouk G.H."/>
            <person name="Daga A."/>
            <person name="Rodig N.M."/>
            <person name="Terhal P.A."/>
            <person name="van Binsbergen E."/>
            <person name="Eid L.A."/>
            <person name="Tasic V."/>
            <person name="Rasouly H.M."/>
            <person name="Lim T.Y."/>
            <person name="Ahram D.F."/>
            <person name="Gharavi A.G."/>
            <person name="Reutter H.M."/>
            <person name="Rehm H.L."/>
            <person name="MacArthur D.G."/>
            <person name="Lek M."/>
            <person name="Laricchia K.M."/>
            <person name="Lifton R.P."/>
            <person name="Xu H."/>
            <person name="Mane S.M."/>
            <person name="Sanna-Cherchi S."/>
            <person name="Sharrocks A.D."/>
            <person name="Raught B."/>
            <person name="Fisher S.E."/>
            <person name="Bouchard M."/>
            <person name="Khokha M.K."/>
            <person name="Shril S."/>
            <person name="Hildebrandt F."/>
        </authorList>
    </citation>
    <scope>TISSUE SPECIFICITY</scope>
    <scope>MUTAGENESIS OF 257-GLY--ASP-1376</scope>
</reference>
<name>ZMYM2_MOUSE</name>
<accession>Q9CU65</accession>
<accession>B2RUS2</accession>
<accession>Q3UUZ8</accession>
<accession>Q3UXK7</accession>
<accession>Q80XP0</accession>
<keyword id="KW-1017">Isopeptide bond</keyword>
<keyword id="KW-0479">Metal-binding</keyword>
<keyword id="KW-0539">Nucleus</keyword>
<keyword id="KW-0597">Phosphoprotein</keyword>
<keyword id="KW-1185">Reference proteome</keyword>
<keyword id="KW-0677">Repeat</keyword>
<keyword id="KW-0804">Transcription</keyword>
<keyword id="KW-0805">Transcription regulation</keyword>
<keyword id="KW-0832">Ubl conjugation</keyword>
<keyword id="KW-0862">Zinc</keyword>
<keyword id="KW-0863">Zinc-finger</keyword>
<sequence>MDTSSVGTLELTDQTPVLLGSTAMATSLTNVGNSFSGPPNPLVSRSSKFQNSSVEDDDDVVFIEPVQPPPSSAPLVADQRPITFTSSKNEELQGNDPKILPSSKELAPQKGSVSETIVIDDEEDMETNQGQEKSSSNFIERRPSETKNRTNDVDFSSSTFSRSKVNAGVSNSGITTEPDSEIQIANVTTLETGVSSVSDGQLESTDGRDMNLMITHVTSLHNTSLGDGSNGLQSSNFGVNIQTYTPSLTSQTKAGVGPFNPGRMNVAGDVFQNGESAPHHNPDSWISQSASFPRNQKQQGVDSLSPVASLPKQIFQPSNQQPTKPVKVTCANCKKPLQKGQTAYQRKGSAHLFCSTTCLSSFSHKPAPKKLCVMCKKDITTMKGTIVAQVDSSESFQEFCSTSCLSLYEDKQSPAKGALNKSRCTICGKLTEIRHEVSFKNMTHKLCSDHCFNRYRMANGLIMNCCEQCGEYLPSKGAGNNVLVVDGQQKRFCCQSCVTEYKQVGSHPSFLKEVRDHMQDSFLMQPEKYGKLTTCTGCRTQCRFFDMTQCIGPNGYMEPYCSTACMNSHKTKYAKSQSLGIICHFCKRNSLPQYQATMPDGKLYNFCNSSCVAKFQALSMQSSPNGQFVAPSDIQLKCNYCKNSFCSKPEILEWENKVHQFCSKTCSDDYKKLHCIVTYCEYCQEEKTLHETVNFSGVKRPFCSEGCKLLYKQDFARRLGLRCVTCNYCSQLCKKGATKELDGVVRDFCSEDCCKKFQEWYYKAARCDCCKSQGTLKERVQWRGEMKHFCDQHCLLRFYCQQNEPNMTTQKGPENLHYDQGCQTSRTKMTGSAPPPSPTPNKEMKNKAILCKPLTMTKATYCKPHMQTKSCQTDENWKTEYVPVPIPVPVYVPVPMHMYSQNIPVPTTVPVPVPVPVFLPAPLDSSEKIPATVEDLKSKVSSDPLDSELLTMTDMMTEEEGKAEASNINSVIIETDIIGSDLTKNSDPDIQSNMPDVPYEPDLDIEIDFPRAAEELDMENEFLLPPVFGEEYEEQPRPRSKKKGTKRKAVSGYQSHDDSSDNSECSFPFKYTYGVNAWKHWVKTRQLDEDLLVLDELKSSKSVKLKEDLLSHTTAELNYGLAHFVNEIRRPNGENYAPDSIYYLCLGIQEYLCGSNRKDNIFIDPGYQMFEQELNKILRSWQPSILPDGSIFSRVEEDYLWRIKQLGSHSPVALLNTLFYFNTKYFGLKTVEQHLRLSFGTVFRHWKKNPLTMENKACLRYQVSSLCGTDNEDKIATGKRKHEDDEPVFEQVENTANPSRCPVKMFECYLSKSPQNLNQRMDVFYLQPECSSSTDSPVWYTSTSLDRNTLENMLVRVLLVKDIYDKDNYELDEDTD</sequence>
<feature type="chain" id="PRO_0000191383" description="Zinc finger MYM-type protein 2">
    <location>
        <begin position="1"/>
        <end position="1376"/>
    </location>
</feature>
<feature type="zinc finger region" description="MYM-type 1" evidence="2">
    <location>
        <begin position="326"/>
        <end position="362"/>
    </location>
</feature>
<feature type="zinc finger region" description="MYM-type 2" evidence="2">
    <location>
        <begin position="368"/>
        <end position="408"/>
    </location>
</feature>
<feature type="zinc finger region" description="MYM-type 3" evidence="2">
    <location>
        <begin position="420"/>
        <end position="455"/>
    </location>
</feature>
<feature type="zinc finger region" description="MYM-type 4" evidence="2">
    <location>
        <begin position="462"/>
        <end position="501"/>
    </location>
</feature>
<feature type="zinc finger region" description="MYM-type 5" evidence="2">
    <location>
        <begin position="532"/>
        <end position="569"/>
    </location>
</feature>
<feature type="zinc finger region" description="MYM-type 6" evidence="2">
    <location>
        <begin position="635"/>
        <end position="670"/>
    </location>
</feature>
<feature type="zinc finger region" description="MYM-type 7" evidence="2">
    <location>
        <begin position="722"/>
        <end position="757"/>
    </location>
</feature>
<feature type="zinc finger region" description="MYM-type 8" evidence="2">
    <location>
        <begin position="763"/>
        <end position="798"/>
    </location>
</feature>
<feature type="region of interest" description="Disordered" evidence="3">
    <location>
        <begin position="30"/>
        <end position="56"/>
    </location>
</feature>
<feature type="region of interest" description="Disordered" evidence="3">
    <location>
        <begin position="85"/>
        <end position="158"/>
    </location>
</feature>
<feature type="region of interest" description="Disordered" evidence="3">
    <location>
        <begin position="269"/>
        <end position="304"/>
    </location>
</feature>
<feature type="region of interest" description="Disordered" evidence="3">
    <location>
        <begin position="1027"/>
        <end position="1063"/>
    </location>
</feature>
<feature type="compositionally biased region" description="Polar residues" evidence="3">
    <location>
        <begin position="30"/>
        <end position="53"/>
    </location>
</feature>
<feature type="compositionally biased region" description="Polar residues" evidence="3">
    <location>
        <begin position="127"/>
        <end position="138"/>
    </location>
</feature>
<feature type="compositionally biased region" description="Basic and acidic residues" evidence="3">
    <location>
        <begin position="139"/>
        <end position="152"/>
    </location>
</feature>
<feature type="compositionally biased region" description="Polar residues" evidence="3">
    <location>
        <begin position="284"/>
        <end position="302"/>
    </location>
</feature>
<feature type="compositionally biased region" description="Basic residues" evidence="3">
    <location>
        <begin position="1038"/>
        <end position="1049"/>
    </location>
</feature>
<feature type="modified residue" description="Phosphoserine" evidence="1">
    <location>
        <position position="305"/>
    </location>
</feature>
<feature type="modified residue" description="Phosphoserine" evidence="1">
    <location>
        <position position="837"/>
    </location>
</feature>
<feature type="modified residue" description="Phosphoserine" evidence="6">
    <location>
        <position position="1063"/>
    </location>
</feature>
<feature type="modified residue" description="Phosphothreonine" evidence="5 6">
    <location>
        <position position="1375"/>
    </location>
</feature>
<feature type="cross-link" description="Glycyl lysine isopeptide (Lys-Gly) (interchain with G-Cter in SUMO2)" evidence="1">
    <location>
        <position position="48"/>
    </location>
</feature>
<feature type="cross-link" description="Glycyl lysine isopeptide (Lys-Gly) (interchain with G-Cter in SUMO2)" evidence="1">
    <location>
        <position position="88"/>
    </location>
</feature>
<feature type="cross-link" description="Glycyl lysine isopeptide (Lys-Gly) (interchain with G-Cter in SUMO2)" evidence="1">
    <location>
        <position position="98"/>
    </location>
</feature>
<feature type="cross-link" description="Glycyl lysine isopeptide (Lys-Gly) (interchain with G-Cter in SUMO2)" evidence="1">
    <location>
        <position position="104"/>
    </location>
</feature>
<feature type="cross-link" description="Glycyl lysine isopeptide (Lys-Gly) (interchain with G-Cter in SUMO2)" evidence="1">
    <location>
        <position position="147"/>
    </location>
</feature>
<feature type="cross-link" description="Glycyl lysine isopeptide (Lys-Gly) (interchain with G-Cter in SUMO2)" evidence="1">
    <location>
        <position position="253"/>
    </location>
</feature>
<feature type="cross-link" description="Glycyl lysine isopeptide (Lys-Gly) (interchain with G-Cter in SUMO2)" evidence="1">
    <location>
        <position position="297"/>
    </location>
</feature>
<feature type="cross-link" description="Glycyl lysine isopeptide (Lys-Gly) (interchain with G-Cter in SUMO2)" evidence="1">
    <location>
        <position position="312"/>
    </location>
</feature>
<feature type="cross-link" description="Glycyl lysine isopeptide (Lys-Gly) (interchain with G-Cter in SUMO2)" evidence="1">
    <location>
        <position position="324"/>
    </location>
</feature>
<feature type="cross-link" description="Glycyl lysine isopeptide (Lys-Gly) (interchain with G-Cter in SUMO2)" evidence="1">
    <location>
        <position position="347"/>
    </location>
</feature>
<feature type="cross-link" description="Glycyl lysine isopeptide (Lys-Gly) (interchain with G-Cter in SUMO2)" evidence="1">
    <location>
        <position position="365"/>
    </location>
</feature>
<feature type="cross-link" description="Glycyl lysine isopeptide (Lys-Gly) (interchain with G-Cter in SUMO2)" evidence="1">
    <location>
        <position position="416"/>
    </location>
</feature>
<feature type="cross-link" description="Glycyl lysine isopeptide (Lys-Gly) (interchain with G-Cter in SUMO2)" evidence="1">
    <location>
        <position position="440"/>
    </location>
</feature>
<feature type="cross-link" description="Glycyl lysine isopeptide (Lys-Gly) (interchain with G-Cter in SUMO2)" evidence="1">
    <location>
        <position position="490"/>
    </location>
</feature>
<feature type="cross-link" description="Glycyl lysine isopeptide (Lys-Gly) (interchain with G-Cter in SUMO2)" evidence="1">
    <location>
        <position position="502"/>
    </location>
</feature>
<feature type="cross-link" description="Glycyl lysine isopeptide (Lys-Gly) (interchain with G-Cter in SUMO2)" evidence="1">
    <location>
        <position position="512"/>
    </location>
</feature>
<feature type="cross-link" description="Glycyl lysine isopeptide (Lys-Gly) (interchain with G-Cter in SUMO2)" evidence="1">
    <location>
        <position position="528"/>
    </location>
</feature>
<feature type="cross-link" description="Glycyl lysine isopeptide (Lys-Gly) (interchain with G-Cter in SUMO2)" evidence="1">
    <location>
        <position position="531"/>
    </location>
</feature>
<feature type="cross-link" description="Glycyl lysine isopeptide (Lys-Gly) (interchain with G-Cter in SUMO2)" evidence="1">
    <location>
        <position position="575"/>
    </location>
</feature>
<feature type="cross-link" description="Glycyl lysine isopeptide (Lys-Gly) (interchain with G-Cter in SUMO2)" evidence="1">
    <location>
        <position position="602"/>
    </location>
</feature>
<feature type="cross-link" description="Glycyl lysine isopeptide (Lys-Gly) (interchain with G-Cter in SUMO2)" evidence="1">
    <location>
        <position position="648"/>
    </location>
</feature>
<feature type="cross-link" description="Glycyl lysine isopeptide (Lys-Gly) (interchain with G-Cter in SUMO2)" evidence="1">
    <location>
        <position position="657"/>
    </location>
</feature>
<feature type="cross-link" description="Glycyl lysine isopeptide (Lys-Gly) (interchain with G-Cter in SUMO2)" evidence="1">
    <location>
        <position position="687"/>
    </location>
</feature>
<feature type="cross-link" description="Glycyl lysine isopeptide (Lys-Gly) (interchain with G-Cter in SUMO2)" evidence="1">
    <location>
        <position position="699"/>
    </location>
</feature>
<feature type="cross-link" description="Glycyl lysine isopeptide (Lys-Gly) (interchain with G-Cter in SUMO2)" evidence="1">
    <location>
        <position position="708"/>
    </location>
</feature>
<feature type="cross-link" description="Glycyl lysine isopeptide (Lys-Gly) (interchain with G-Cter in SUMO2)" evidence="1">
    <location>
        <position position="763"/>
    </location>
</feature>
<feature type="cross-link" description="Glycyl lysine isopeptide (Lys-Gly) (interchain with G-Cter in SUMO2)" evidence="1">
    <location>
        <position position="787"/>
    </location>
</feature>
<feature type="cross-link" description="Glycyl lysine isopeptide (Lys-Gly) (interchain with G-Cter in SUMO2)" evidence="1">
    <location>
        <position position="811"/>
    </location>
</feature>
<feature type="cross-link" description="Glycyl lysine isopeptide (Lys-Gly) (interchain with G-Cter in SUMO2)" evidence="1">
    <location>
        <position position="828"/>
    </location>
</feature>
<feature type="mutagenesis site" description="Heterozygous mutant mice show anomalies of the kidney and urinary tract." evidence="4">
    <location>
        <begin position="257"/>
        <end position="1376"/>
    </location>
</feature>
<gene>
    <name type="primary">Zmym2</name>
    <name type="synonym">Zfp198</name>
    <name type="synonym">Znf198</name>
</gene>